<proteinExistence type="inferred from homology"/>
<name>ATPD_STRMK</name>
<protein>
    <recommendedName>
        <fullName evidence="1">ATP synthase subunit delta</fullName>
    </recommendedName>
    <alternativeName>
        <fullName evidence="1">ATP synthase F(1) sector subunit delta</fullName>
    </alternativeName>
    <alternativeName>
        <fullName evidence="1">F-type ATPase subunit delta</fullName>
        <shortName evidence="1">F-ATPase subunit delta</shortName>
    </alternativeName>
</protein>
<dbReference type="EMBL" id="AM743169">
    <property type="protein sequence ID" value="CAQ47505.1"/>
    <property type="molecule type" value="Genomic_DNA"/>
</dbReference>
<dbReference type="RefSeq" id="WP_012481320.1">
    <property type="nucleotide sequence ID" value="NC_010943.1"/>
</dbReference>
<dbReference type="SMR" id="B2FHZ1"/>
<dbReference type="EnsemblBacteria" id="CAQ47505">
    <property type="protein sequence ID" value="CAQ47505"/>
    <property type="gene ID" value="Smlt4114"/>
</dbReference>
<dbReference type="KEGG" id="sml:Smlt4114"/>
<dbReference type="PATRIC" id="fig|522373.3.peg.3885"/>
<dbReference type="eggNOG" id="COG0712">
    <property type="taxonomic scope" value="Bacteria"/>
</dbReference>
<dbReference type="HOGENOM" id="CLU_085114_3_0_6"/>
<dbReference type="Proteomes" id="UP000008840">
    <property type="component" value="Chromosome"/>
</dbReference>
<dbReference type="GO" id="GO:0005886">
    <property type="term" value="C:plasma membrane"/>
    <property type="evidence" value="ECO:0007669"/>
    <property type="project" value="UniProtKB-SubCell"/>
</dbReference>
<dbReference type="GO" id="GO:0045259">
    <property type="term" value="C:proton-transporting ATP synthase complex"/>
    <property type="evidence" value="ECO:0007669"/>
    <property type="project" value="UniProtKB-KW"/>
</dbReference>
<dbReference type="GO" id="GO:0046933">
    <property type="term" value="F:proton-transporting ATP synthase activity, rotational mechanism"/>
    <property type="evidence" value="ECO:0007669"/>
    <property type="project" value="UniProtKB-UniRule"/>
</dbReference>
<dbReference type="Gene3D" id="1.10.520.20">
    <property type="entry name" value="N-terminal domain of the delta subunit of the F1F0-ATP synthase"/>
    <property type="match status" value="1"/>
</dbReference>
<dbReference type="HAMAP" id="MF_01416">
    <property type="entry name" value="ATP_synth_delta_bact"/>
    <property type="match status" value="1"/>
</dbReference>
<dbReference type="InterPro" id="IPR026015">
    <property type="entry name" value="ATP_synth_OSCP/delta_N_sf"/>
</dbReference>
<dbReference type="InterPro" id="IPR000711">
    <property type="entry name" value="ATPase_OSCP/dsu"/>
</dbReference>
<dbReference type="NCBIfam" id="TIGR01145">
    <property type="entry name" value="ATP_synt_delta"/>
    <property type="match status" value="1"/>
</dbReference>
<dbReference type="NCBIfam" id="NF004402">
    <property type="entry name" value="PRK05758.2-2"/>
    <property type="match status" value="1"/>
</dbReference>
<dbReference type="PANTHER" id="PTHR11910">
    <property type="entry name" value="ATP SYNTHASE DELTA CHAIN"/>
    <property type="match status" value="1"/>
</dbReference>
<dbReference type="Pfam" id="PF00213">
    <property type="entry name" value="OSCP"/>
    <property type="match status" value="1"/>
</dbReference>
<dbReference type="PRINTS" id="PR00125">
    <property type="entry name" value="ATPASEDELTA"/>
</dbReference>
<dbReference type="SUPFAM" id="SSF47928">
    <property type="entry name" value="N-terminal domain of the delta subunit of the F1F0-ATP synthase"/>
    <property type="match status" value="1"/>
</dbReference>
<feature type="chain" id="PRO_1000184811" description="ATP synthase subunit delta">
    <location>
        <begin position="1"/>
        <end position="175"/>
    </location>
</feature>
<evidence type="ECO:0000255" key="1">
    <source>
        <dbReference type="HAMAP-Rule" id="MF_01416"/>
    </source>
</evidence>
<reference key="1">
    <citation type="journal article" date="2008" name="Genome Biol.">
        <title>The complete genome, comparative and functional analysis of Stenotrophomonas maltophilia reveals an organism heavily shielded by drug resistance determinants.</title>
        <authorList>
            <person name="Crossman L.C."/>
            <person name="Gould V.C."/>
            <person name="Dow J.M."/>
            <person name="Vernikos G.S."/>
            <person name="Okazaki A."/>
            <person name="Sebaihia M."/>
            <person name="Saunders D."/>
            <person name="Arrowsmith C."/>
            <person name="Carver T."/>
            <person name="Peters N."/>
            <person name="Adlem E."/>
            <person name="Kerhornou A."/>
            <person name="Lord A."/>
            <person name="Murphy L."/>
            <person name="Seeger K."/>
            <person name="Squares R."/>
            <person name="Rutter S."/>
            <person name="Quail M.A."/>
            <person name="Rajandream M.A."/>
            <person name="Harris D."/>
            <person name="Churcher C."/>
            <person name="Bentley S.D."/>
            <person name="Parkhill J."/>
            <person name="Thomson N.R."/>
            <person name="Avison M.B."/>
        </authorList>
    </citation>
    <scope>NUCLEOTIDE SEQUENCE [LARGE SCALE GENOMIC DNA]</scope>
    <source>
        <strain>K279a</strain>
    </source>
</reference>
<gene>
    <name evidence="1" type="primary">atpH</name>
    <name type="ordered locus">Smlt4114</name>
</gene>
<accession>B2FHZ1</accession>
<sequence>MSQALTLARPYARAAFATARDEGAFAPWSDALAFSAHVAVDPRVAALLANPELGRDDAVALLAPVSHGETYSRFLAILAESHRLPLLPEISGMFDALRAEAEHVVKATVTSAAELSAGELDAIKVALRKRFNREVDVTTAVDASLIGGAVIDAGDVVIDGSLKGKLARLQTALAN</sequence>
<keyword id="KW-0066">ATP synthesis</keyword>
<keyword id="KW-1003">Cell membrane</keyword>
<keyword id="KW-0139">CF(1)</keyword>
<keyword id="KW-0375">Hydrogen ion transport</keyword>
<keyword id="KW-0406">Ion transport</keyword>
<keyword id="KW-0472">Membrane</keyword>
<keyword id="KW-1185">Reference proteome</keyword>
<keyword id="KW-0813">Transport</keyword>
<organism>
    <name type="scientific">Stenotrophomonas maltophilia (strain K279a)</name>
    <dbReference type="NCBI Taxonomy" id="522373"/>
    <lineage>
        <taxon>Bacteria</taxon>
        <taxon>Pseudomonadati</taxon>
        <taxon>Pseudomonadota</taxon>
        <taxon>Gammaproteobacteria</taxon>
        <taxon>Lysobacterales</taxon>
        <taxon>Lysobacteraceae</taxon>
        <taxon>Stenotrophomonas</taxon>
        <taxon>Stenotrophomonas maltophilia group</taxon>
    </lineage>
</organism>
<comment type="function">
    <text evidence="1">F(1)F(0) ATP synthase produces ATP from ADP in the presence of a proton or sodium gradient. F-type ATPases consist of two structural domains, F(1) containing the extramembraneous catalytic core and F(0) containing the membrane proton channel, linked together by a central stalk and a peripheral stalk. During catalysis, ATP synthesis in the catalytic domain of F(1) is coupled via a rotary mechanism of the central stalk subunits to proton translocation.</text>
</comment>
<comment type="function">
    <text evidence="1">This protein is part of the stalk that links CF(0) to CF(1). It either transmits conformational changes from CF(0) to CF(1) or is implicated in proton conduction.</text>
</comment>
<comment type="subunit">
    <text evidence="1">F-type ATPases have 2 components, F(1) - the catalytic core - and F(0) - the membrane proton channel. F(1) has five subunits: alpha(3), beta(3), gamma(1), delta(1), epsilon(1). F(0) has three main subunits: a(1), b(2) and c(10-14). The alpha and beta chains form an alternating ring which encloses part of the gamma chain. F(1) is attached to F(0) by a central stalk formed by the gamma and epsilon chains, while a peripheral stalk is formed by the delta and b chains.</text>
</comment>
<comment type="subcellular location">
    <subcellularLocation>
        <location evidence="1">Cell membrane</location>
        <topology evidence="1">Peripheral membrane protein</topology>
    </subcellularLocation>
</comment>
<comment type="similarity">
    <text evidence="1">Belongs to the ATPase delta chain family.</text>
</comment>